<sequence>MSKRALISVSDKEGIVEFAKKIQELGWEIISTGGTKAVLDQEEIPNIAIDEVTGFPEMMDGRVKTLHPLIHGALLGRRDLDSHMKSLAEHHISPIDLVVVNLYPFKETLLAGGSQAEMIEKIDIGGPSMLRSAAKNHAAVTVVCDPMDYEKVEKELSADGETSLELRQQLAAKVFRHTASYDALIAQYLTEEFPVEDTKPEKLTLTYDLKQGMRYGENPQQSADFYESGLPTTYSIAQSHQLHGKELSYNNVRDADAALQIARDFDEPTVVALKHMNPCGIGTAKNIEQAWDYAYEADPVSIFGGIIVLNREVTEETAQKMSKIFLEIIIAPSYSKEALEILSKKKNIRLLTVDFSKKEQSEKEALVTGVLGGLLVQNQDVIVENPKEWTVATKVQPTDRQMEAMKFAWKAVKFVKSNGIIVTNDHQTLGVGPGQTNRVGSVKIALEATADKDALLQENAVLGSDAFFPFADNIDEIAKAGIKAIVQPGGSVRDQEVIEACDKYGIAMVFTGLRHFRH</sequence>
<name>PUR9_LACLS</name>
<evidence type="ECO:0000255" key="1">
    <source>
        <dbReference type="HAMAP-Rule" id="MF_00139"/>
    </source>
</evidence>
<evidence type="ECO:0000255" key="2">
    <source>
        <dbReference type="PROSITE-ProRule" id="PRU01202"/>
    </source>
</evidence>
<protein>
    <recommendedName>
        <fullName evidence="1">Bifunctional purine biosynthesis protein PurH</fullName>
    </recommendedName>
    <domain>
        <recommendedName>
            <fullName evidence="1">Phosphoribosylaminoimidazolecarboxamide formyltransferase</fullName>
            <ecNumber evidence="1">2.1.2.3</ecNumber>
        </recommendedName>
        <alternativeName>
            <fullName evidence="1">AICAR transformylase</fullName>
        </alternativeName>
    </domain>
    <domain>
        <recommendedName>
            <fullName evidence="1">IMP cyclohydrolase</fullName>
            <ecNumber evidence="1">3.5.4.10</ecNumber>
        </recommendedName>
        <alternativeName>
            <fullName evidence="1">ATIC</fullName>
        </alternativeName>
        <alternativeName>
            <fullName evidence="1">IMP synthase</fullName>
        </alternativeName>
        <alternativeName>
            <fullName evidence="1">Inosinicase</fullName>
        </alternativeName>
    </domain>
</protein>
<reference key="1">
    <citation type="journal article" date="2006" name="Proc. Natl. Acad. Sci. U.S.A.">
        <title>Comparative genomics of the lactic acid bacteria.</title>
        <authorList>
            <person name="Makarova K.S."/>
            <person name="Slesarev A."/>
            <person name="Wolf Y.I."/>
            <person name="Sorokin A."/>
            <person name="Mirkin B."/>
            <person name="Koonin E.V."/>
            <person name="Pavlov A."/>
            <person name="Pavlova N."/>
            <person name="Karamychev V."/>
            <person name="Polouchine N."/>
            <person name="Shakhova V."/>
            <person name="Grigoriev I."/>
            <person name="Lou Y."/>
            <person name="Rohksar D."/>
            <person name="Lucas S."/>
            <person name="Huang K."/>
            <person name="Goodstein D.M."/>
            <person name="Hawkins T."/>
            <person name="Plengvidhya V."/>
            <person name="Welker D."/>
            <person name="Hughes J."/>
            <person name="Goh Y."/>
            <person name="Benson A."/>
            <person name="Baldwin K."/>
            <person name="Lee J.-H."/>
            <person name="Diaz-Muniz I."/>
            <person name="Dosti B."/>
            <person name="Smeianov V."/>
            <person name="Wechter W."/>
            <person name="Barabote R."/>
            <person name="Lorca G."/>
            <person name="Altermann E."/>
            <person name="Barrangou R."/>
            <person name="Ganesan B."/>
            <person name="Xie Y."/>
            <person name="Rawsthorne H."/>
            <person name="Tamir D."/>
            <person name="Parker C."/>
            <person name="Breidt F."/>
            <person name="Broadbent J.R."/>
            <person name="Hutkins R."/>
            <person name="O'Sullivan D."/>
            <person name="Steele J."/>
            <person name="Unlu G."/>
            <person name="Saier M.H. Jr."/>
            <person name="Klaenhammer T."/>
            <person name="Richardson P."/>
            <person name="Kozyavkin S."/>
            <person name="Weimer B.C."/>
            <person name="Mills D.A."/>
        </authorList>
    </citation>
    <scope>NUCLEOTIDE SEQUENCE [LARGE SCALE GENOMIC DNA]</scope>
    <source>
        <strain>SK11</strain>
    </source>
</reference>
<dbReference type="EC" id="2.1.2.3" evidence="1"/>
<dbReference type="EC" id="3.5.4.10" evidence="1"/>
<dbReference type="EMBL" id="CP000425">
    <property type="protein sequence ID" value="ABJ73106.1"/>
    <property type="molecule type" value="Genomic_DNA"/>
</dbReference>
<dbReference type="RefSeq" id="WP_011676465.1">
    <property type="nucleotide sequence ID" value="NC_008527.1"/>
</dbReference>
<dbReference type="SMR" id="Q02Y66"/>
<dbReference type="KEGG" id="llc:LACR_1605"/>
<dbReference type="HOGENOM" id="CLU_016316_5_2_9"/>
<dbReference type="UniPathway" id="UPA00074">
    <property type="reaction ID" value="UER00133"/>
</dbReference>
<dbReference type="UniPathway" id="UPA00074">
    <property type="reaction ID" value="UER00135"/>
</dbReference>
<dbReference type="Proteomes" id="UP000000240">
    <property type="component" value="Chromosome"/>
</dbReference>
<dbReference type="GO" id="GO:0005829">
    <property type="term" value="C:cytosol"/>
    <property type="evidence" value="ECO:0007669"/>
    <property type="project" value="TreeGrafter"/>
</dbReference>
<dbReference type="GO" id="GO:0003937">
    <property type="term" value="F:IMP cyclohydrolase activity"/>
    <property type="evidence" value="ECO:0007669"/>
    <property type="project" value="UniProtKB-UniRule"/>
</dbReference>
<dbReference type="GO" id="GO:0004643">
    <property type="term" value="F:phosphoribosylaminoimidazolecarboxamide formyltransferase activity"/>
    <property type="evidence" value="ECO:0007669"/>
    <property type="project" value="UniProtKB-UniRule"/>
</dbReference>
<dbReference type="GO" id="GO:0006189">
    <property type="term" value="P:'de novo' IMP biosynthetic process"/>
    <property type="evidence" value="ECO:0007669"/>
    <property type="project" value="UniProtKB-UniRule"/>
</dbReference>
<dbReference type="CDD" id="cd01421">
    <property type="entry name" value="IMPCH"/>
    <property type="match status" value="1"/>
</dbReference>
<dbReference type="FunFam" id="3.40.140.20:FF:000001">
    <property type="entry name" value="Bifunctional purine biosynthesis protein PurH"/>
    <property type="match status" value="1"/>
</dbReference>
<dbReference type="FunFam" id="3.40.140.20:FF:000002">
    <property type="entry name" value="Bifunctional purine biosynthesis protein PurH"/>
    <property type="match status" value="1"/>
</dbReference>
<dbReference type="FunFam" id="3.40.50.1380:FF:000001">
    <property type="entry name" value="Bifunctional purine biosynthesis protein PurH"/>
    <property type="match status" value="1"/>
</dbReference>
<dbReference type="Gene3D" id="3.40.140.20">
    <property type="match status" value="2"/>
</dbReference>
<dbReference type="Gene3D" id="3.40.50.1380">
    <property type="entry name" value="Methylglyoxal synthase-like domain"/>
    <property type="match status" value="1"/>
</dbReference>
<dbReference type="HAMAP" id="MF_00139">
    <property type="entry name" value="PurH"/>
    <property type="match status" value="1"/>
</dbReference>
<dbReference type="InterPro" id="IPR024051">
    <property type="entry name" value="AICAR_Tfase_dup_dom_sf"/>
</dbReference>
<dbReference type="InterPro" id="IPR016193">
    <property type="entry name" value="Cytidine_deaminase-like"/>
</dbReference>
<dbReference type="InterPro" id="IPR011607">
    <property type="entry name" value="MGS-like_dom"/>
</dbReference>
<dbReference type="InterPro" id="IPR036914">
    <property type="entry name" value="MGS-like_dom_sf"/>
</dbReference>
<dbReference type="InterPro" id="IPR002695">
    <property type="entry name" value="PurH-like"/>
</dbReference>
<dbReference type="NCBIfam" id="NF002049">
    <property type="entry name" value="PRK00881.1"/>
    <property type="match status" value="1"/>
</dbReference>
<dbReference type="NCBIfam" id="TIGR00355">
    <property type="entry name" value="purH"/>
    <property type="match status" value="1"/>
</dbReference>
<dbReference type="PANTHER" id="PTHR11692:SF0">
    <property type="entry name" value="BIFUNCTIONAL PURINE BIOSYNTHESIS PROTEIN ATIC"/>
    <property type="match status" value="1"/>
</dbReference>
<dbReference type="PANTHER" id="PTHR11692">
    <property type="entry name" value="BIFUNCTIONAL PURINE BIOSYNTHESIS PROTEIN PURH"/>
    <property type="match status" value="1"/>
</dbReference>
<dbReference type="Pfam" id="PF01808">
    <property type="entry name" value="AICARFT_IMPCHas"/>
    <property type="match status" value="1"/>
</dbReference>
<dbReference type="Pfam" id="PF02142">
    <property type="entry name" value="MGS"/>
    <property type="match status" value="1"/>
</dbReference>
<dbReference type="PIRSF" id="PIRSF000414">
    <property type="entry name" value="AICARFT_IMPCHas"/>
    <property type="match status" value="1"/>
</dbReference>
<dbReference type="SMART" id="SM00798">
    <property type="entry name" value="AICARFT_IMPCHas"/>
    <property type="match status" value="1"/>
</dbReference>
<dbReference type="SMART" id="SM00851">
    <property type="entry name" value="MGS"/>
    <property type="match status" value="1"/>
</dbReference>
<dbReference type="SUPFAM" id="SSF53927">
    <property type="entry name" value="Cytidine deaminase-like"/>
    <property type="match status" value="1"/>
</dbReference>
<dbReference type="SUPFAM" id="SSF52335">
    <property type="entry name" value="Methylglyoxal synthase-like"/>
    <property type="match status" value="1"/>
</dbReference>
<dbReference type="PROSITE" id="PS51855">
    <property type="entry name" value="MGS"/>
    <property type="match status" value="1"/>
</dbReference>
<gene>
    <name evidence="1" type="primary">purH</name>
    <name type="ordered locus">LACR_1605</name>
</gene>
<comment type="catalytic activity">
    <reaction evidence="1">
        <text>(6R)-10-formyltetrahydrofolate + 5-amino-1-(5-phospho-beta-D-ribosyl)imidazole-4-carboxamide = 5-formamido-1-(5-phospho-D-ribosyl)imidazole-4-carboxamide + (6S)-5,6,7,8-tetrahydrofolate</text>
        <dbReference type="Rhea" id="RHEA:22192"/>
        <dbReference type="ChEBI" id="CHEBI:57453"/>
        <dbReference type="ChEBI" id="CHEBI:58467"/>
        <dbReference type="ChEBI" id="CHEBI:58475"/>
        <dbReference type="ChEBI" id="CHEBI:195366"/>
        <dbReference type="EC" id="2.1.2.3"/>
    </reaction>
</comment>
<comment type="catalytic activity">
    <reaction evidence="1">
        <text>IMP + H2O = 5-formamido-1-(5-phospho-D-ribosyl)imidazole-4-carboxamide</text>
        <dbReference type="Rhea" id="RHEA:18445"/>
        <dbReference type="ChEBI" id="CHEBI:15377"/>
        <dbReference type="ChEBI" id="CHEBI:58053"/>
        <dbReference type="ChEBI" id="CHEBI:58467"/>
        <dbReference type="EC" id="3.5.4.10"/>
    </reaction>
</comment>
<comment type="pathway">
    <text evidence="1">Purine metabolism; IMP biosynthesis via de novo pathway; 5-formamido-1-(5-phospho-D-ribosyl)imidazole-4-carboxamide from 5-amino-1-(5-phospho-D-ribosyl)imidazole-4-carboxamide (10-formyl THF route): step 1/1.</text>
</comment>
<comment type="pathway">
    <text evidence="1">Purine metabolism; IMP biosynthesis via de novo pathway; IMP from 5-formamido-1-(5-phospho-D-ribosyl)imidazole-4-carboxamide: step 1/1.</text>
</comment>
<comment type="domain">
    <text evidence="1">The IMP cyclohydrolase activity resides in the N-terminal region.</text>
</comment>
<comment type="similarity">
    <text evidence="1">Belongs to the PurH family.</text>
</comment>
<keyword id="KW-0378">Hydrolase</keyword>
<keyword id="KW-0511">Multifunctional enzyme</keyword>
<keyword id="KW-0658">Purine biosynthesis</keyword>
<keyword id="KW-0808">Transferase</keyword>
<accession>Q02Y66</accession>
<proteinExistence type="inferred from homology"/>
<organism>
    <name type="scientific">Lactococcus lactis subsp. cremoris (strain SK11)</name>
    <dbReference type="NCBI Taxonomy" id="272622"/>
    <lineage>
        <taxon>Bacteria</taxon>
        <taxon>Bacillati</taxon>
        <taxon>Bacillota</taxon>
        <taxon>Bacilli</taxon>
        <taxon>Lactobacillales</taxon>
        <taxon>Streptococcaceae</taxon>
        <taxon>Lactococcus</taxon>
        <taxon>Lactococcus cremoris subsp. cremoris</taxon>
    </lineage>
</organism>
<feature type="chain" id="PRO_1000018901" description="Bifunctional purine biosynthesis protein PurH">
    <location>
        <begin position="1"/>
        <end position="518"/>
    </location>
</feature>
<feature type="domain" description="MGS-like" evidence="2">
    <location>
        <begin position="1"/>
        <end position="144"/>
    </location>
</feature>